<gene>
    <name evidence="1" type="primary">rps14</name>
    <name type="ordered locus">Mhun_2239</name>
</gene>
<evidence type="ECO:0000255" key="1">
    <source>
        <dbReference type="HAMAP-Rule" id="MF_01364"/>
    </source>
</evidence>
<evidence type="ECO:0000305" key="2"/>
<protein>
    <recommendedName>
        <fullName evidence="1">Small ribosomal subunit protein uS14</fullName>
    </recommendedName>
    <alternativeName>
        <fullName evidence="2">30S ribosomal protein S14 type Z</fullName>
    </alternativeName>
</protein>
<feature type="chain" id="PRO_0000269166" description="Small ribosomal subunit protein uS14">
    <location>
        <begin position="1"/>
        <end position="56"/>
    </location>
</feature>
<feature type="binding site" evidence="1">
    <location>
        <position position="21"/>
    </location>
    <ligand>
        <name>Zn(2+)</name>
        <dbReference type="ChEBI" id="CHEBI:29105"/>
    </ligand>
</feature>
<feature type="binding site" evidence="1">
    <location>
        <position position="24"/>
    </location>
    <ligand>
        <name>Zn(2+)</name>
        <dbReference type="ChEBI" id="CHEBI:29105"/>
    </ligand>
</feature>
<feature type="binding site" evidence="1">
    <location>
        <position position="39"/>
    </location>
    <ligand>
        <name>Zn(2+)</name>
        <dbReference type="ChEBI" id="CHEBI:29105"/>
    </ligand>
</feature>
<feature type="binding site" evidence="1">
    <location>
        <position position="42"/>
    </location>
    <ligand>
        <name>Zn(2+)</name>
        <dbReference type="ChEBI" id="CHEBI:29105"/>
    </ligand>
</feature>
<reference key="1">
    <citation type="journal article" date="2016" name="Stand. Genomic Sci.">
        <title>Complete genome sequence of Methanospirillum hungatei type strain JF1.</title>
        <authorList>
            <person name="Gunsalus R.P."/>
            <person name="Cook L.E."/>
            <person name="Crable B."/>
            <person name="Rohlin L."/>
            <person name="McDonald E."/>
            <person name="Mouttaki H."/>
            <person name="Sieber J.R."/>
            <person name="Poweleit N."/>
            <person name="Zhou H."/>
            <person name="Lapidus A.L."/>
            <person name="Daligault H.E."/>
            <person name="Land M."/>
            <person name="Gilna P."/>
            <person name="Ivanova N."/>
            <person name="Kyrpides N."/>
            <person name="Culley D.E."/>
            <person name="McInerney M.J."/>
        </authorList>
    </citation>
    <scope>NUCLEOTIDE SEQUENCE [LARGE SCALE GENOMIC DNA]</scope>
    <source>
        <strain>ATCC 27890 / DSM 864 / NBRC 100397 / JF-1</strain>
    </source>
</reference>
<sequence length="56" mass="6624">MANIKAGKERTKIFGRGSHECLLCGRKQGLVRRYNIFFCRQCFREWAPKMGFKKLN</sequence>
<comment type="function">
    <text evidence="1">Binds 16S rRNA, required for the assembly of 30S particles.</text>
</comment>
<comment type="cofactor">
    <cofactor evidence="1">
        <name>Zn(2+)</name>
        <dbReference type="ChEBI" id="CHEBI:29105"/>
    </cofactor>
    <text evidence="1">Binds 1 zinc ion per subunit.</text>
</comment>
<comment type="subunit">
    <text evidence="1">Part of the 30S ribosomal subunit.</text>
</comment>
<comment type="similarity">
    <text evidence="1">Belongs to the universal ribosomal protein uS14 family. Zinc-binding uS14 subfamily.</text>
</comment>
<proteinExistence type="inferred from homology"/>
<accession>Q2FSG1</accession>
<keyword id="KW-0479">Metal-binding</keyword>
<keyword id="KW-1185">Reference proteome</keyword>
<keyword id="KW-0687">Ribonucleoprotein</keyword>
<keyword id="KW-0689">Ribosomal protein</keyword>
<keyword id="KW-0694">RNA-binding</keyword>
<keyword id="KW-0699">rRNA-binding</keyword>
<keyword id="KW-0862">Zinc</keyword>
<dbReference type="EMBL" id="CP000254">
    <property type="protein sequence ID" value="ABD41944.1"/>
    <property type="molecule type" value="Genomic_DNA"/>
</dbReference>
<dbReference type="RefSeq" id="WP_011449202.1">
    <property type="nucleotide sequence ID" value="NC_007796.1"/>
</dbReference>
<dbReference type="SMR" id="Q2FSG1"/>
<dbReference type="FunCoup" id="Q2FSG1">
    <property type="interactions" value="127"/>
</dbReference>
<dbReference type="STRING" id="323259.Mhun_2239"/>
<dbReference type="EnsemblBacteria" id="ABD41944">
    <property type="protein sequence ID" value="ABD41944"/>
    <property type="gene ID" value="Mhun_2239"/>
</dbReference>
<dbReference type="GeneID" id="32154826"/>
<dbReference type="KEGG" id="mhu:Mhun_2239"/>
<dbReference type="eggNOG" id="arCOG00782">
    <property type="taxonomic scope" value="Archaea"/>
</dbReference>
<dbReference type="HOGENOM" id="CLU_177289_2_2_2"/>
<dbReference type="InParanoid" id="Q2FSG1"/>
<dbReference type="OrthoDB" id="5615at2157"/>
<dbReference type="Proteomes" id="UP000001941">
    <property type="component" value="Chromosome"/>
</dbReference>
<dbReference type="GO" id="GO:0022627">
    <property type="term" value="C:cytosolic small ribosomal subunit"/>
    <property type="evidence" value="ECO:0007669"/>
    <property type="project" value="TreeGrafter"/>
</dbReference>
<dbReference type="GO" id="GO:0019843">
    <property type="term" value="F:rRNA binding"/>
    <property type="evidence" value="ECO:0007669"/>
    <property type="project" value="UniProtKB-UniRule"/>
</dbReference>
<dbReference type="GO" id="GO:0003735">
    <property type="term" value="F:structural constituent of ribosome"/>
    <property type="evidence" value="ECO:0007669"/>
    <property type="project" value="InterPro"/>
</dbReference>
<dbReference type="GO" id="GO:0008270">
    <property type="term" value="F:zinc ion binding"/>
    <property type="evidence" value="ECO:0007669"/>
    <property type="project" value="UniProtKB-UniRule"/>
</dbReference>
<dbReference type="GO" id="GO:0002181">
    <property type="term" value="P:cytoplasmic translation"/>
    <property type="evidence" value="ECO:0007669"/>
    <property type="project" value="TreeGrafter"/>
</dbReference>
<dbReference type="FunFam" id="4.10.830.10:FF:000002">
    <property type="entry name" value="40S ribosomal protein S29"/>
    <property type="match status" value="1"/>
</dbReference>
<dbReference type="Gene3D" id="4.10.830.10">
    <property type="entry name" value="30s Ribosomal Protein S14, Chain N"/>
    <property type="match status" value="1"/>
</dbReference>
<dbReference type="HAMAP" id="MF_01364_A">
    <property type="entry name" value="Ribosomal_uS14_2_A"/>
    <property type="match status" value="1"/>
</dbReference>
<dbReference type="InterPro" id="IPR001209">
    <property type="entry name" value="Ribosomal_uS14"/>
</dbReference>
<dbReference type="InterPro" id="IPR023676">
    <property type="entry name" value="Ribosomal_uS14_arc"/>
</dbReference>
<dbReference type="InterPro" id="IPR039744">
    <property type="entry name" value="RIbosomal_uS14_euk_arc"/>
</dbReference>
<dbReference type="InterPro" id="IPR043140">
    <property type="entry name" value="Ribosomal_uS14_sf"/>
</dbReference>
<dbReference type="NCBIfam" id="NF004424">
    <property type="entry name" value="PRK05766.1"/>
    <property type="match status" value="1"/>
</dbReference>
<dbReference type="PANTHER" id="PTHR12010">
    <property type="entry name" value="40S RIBOSOMAL PROTEIN S29"/>
    <property type="match status" value="1"/>
</dbReference>
<dbReference type="PANTHER" id="PTHR12010:SF2">
    <property type="entry name" value="40S RIBOSOMAL PROTEIN S29"/>
    <property type="match status" value="1"/>
</dbReference>
<dbReference type="Pfam" id="PF00253">
    <property type="entry name" value="Ribosomal_S14"/>
    <property type="match status" value="1"/>
</dbReference>
<dbReference type="SUPFAM" id="SSF57716">
    <property type="entry name" value="Glucocorticoid receptor-like (DNA-binding domain)"/>
    <property type="match status" value="1"/>
</dbReference>
<organism>
    <name type="scientific">Methanospirillum hungatei JF-1 (strain ATCC 27890 / DSM 864 / NBRC 100397 / JF-1)</name>
    <dbReference type="NCBI Taxonomy" id="323259"/>
    <lineage>
        <taxon>Archaea</taxon>
        <taxon>Methanobacteriati</taxon>
        <taxon>Methanobacteriota</taxon>
        <taxon>Stenosarchaea group</taxon>
        <taxon>Methanomicrobia</taxon>
        <taxon>Methanomicrobiales</taxon>
        <taxon>Methanospirillaceae</taxon>
        <taxon>Methanospirillum</taxon>
    </lineage>
</organism>
<name>RS14Z_METHJ</name>